<protein>
    <recommendedName>
        <fullName evidence="1">PTS system N-acetylmuramic acid-specific EIIBC component</fullName>
    </recommendedName>
    <alternativeName>
        <fullName evidence="1">EIIBC-MurNAc</fullName>
    </alternativeName>
    <domain>
        <recommendedName>
            <fullName evidence="1">N-acetylmuramic acid-specific phosphotransferase enzyme IIB component</fullName>
            <ecNumber evidence="1">2.7.1.192</ecNumber>
        </recommendedName>
        <alternativeName>
            <fullName evidence="1">PTS system N-acetylmuramic acid-specific EIIB component</fullName>
        </alternativeName>
    </domain>
    <domain>
        <recommendedName>
            <fullName evidence="1">N-acetylmuramic acid permease IIC component</fullName>
        </recommendedName>
        <alternativeName>
            <fullName evidence="1">PTS system N-acetylmuramic acid-specific EIIC component</fullName>
        </alternativeName>
    </domain>
</protein>
<gene>
    <name type="primary">murP</name>
    <name type="ordered locus">Z3694</name>
    <name type="ordered locus">ECs3300</name>
</gene>
<dbReference type="EC" id="2.7.1.192" evidence="1"/>
<dbReference type="EMBL" id="AE005174">
    <property type="protein sequence ID" value="AAG57547.1"/>
    <property type="molecule type" value="Genomic_DNA"/>
</dbReference>
<dbReference type="EMBL" id="BA000007">
    <property type="protein sequence ID" value="BAB36723.1"/>
    <property type="molecule type" value="Genomic_DNA"/>
</dbReference>
<dbReference type="PIR" id="D91041">
    <property type="entry name" value="D91041"/>
</dbReference>
<dbReference type="PIR" id="G85885">
    <property type="entry name" value="G85885"/>
</dbReference>
<dbReference type="RefSeq" id="NP_311327.1">
    <property type="nucleotide sequence ID" value="NC_002695.1"/>
</dbReference>
<dbReference type="RefSeq" id="WP_001040450.1">
    <property type="nucleotide sequence ID" value="NZ_VOAI01000001.1"/>
</dbReference>
<dbReference type="SMR" id="Q8XBJ1"/>
<dbReference type="STRING" id="155864.Z3694"/>
<dbReference type="GeneID" id="75172543"/>
<dbReference type="GeneID" id="915478"/>
<dbReference type="KEGG" id="ece:Z3694"/>
<dbReference type="KEGG" id="ecs:ECs_3300"/>
<dbReference type="PATRIC" id="fig|386585.9.peg.3447"/>
<dbReference type="eggNOG" id="COG1263">
    <property type="taxonomic scope" value="Bacteria"/>
</dbReference>
<dbReference type="eggNOG" id="COG1264">
    <property type="taxonomic scope" value="Bacteria"/>
</dbReference>
<dbReference type="HOGENOM" id="CLU_012312_2_0_6"/>
<dbReference type="OMA" id="SITNCMT"/>
<dbReference type="Proteomes" id="UP000000558">
    <property type="component" value="Chromosome"/>
</dbReference>
<dbReference type="Proteomes" id="UP000002519">
    <property type="component" value="Chromosome"/>
</dbReference>
<dbReference type="GO" id="GO:0005886">
    <property type="term" value="C:plasma membrane"/>
    <property type="evidence" value="ECO:0007669"/>
    <property type="project" value="UniProtKB-SubCell"/>
</dbReference>
<dbReference type="GO" id="GO:0016301">
    <property type="term" value="F:kinase activity"/>
    <property type="evidence" value="ECO:0007669"/>
    <property type="project" value="UniProtKB-KW"/>
</dbReference>
<dbReference type="GO" id="GO:0008982">
    <property type="term" value="F:protein-N(PI)-phosphohistidine-sugar phosphotransferase activity"/>
    <property type="evidence" value="ECO:0007669"/>
    <property type="project" value="InterPro"/>
</dbReference>
<dbReference type="GO" id="GO:0090588">
    <property type="term" value="F:protein-phosphocysteine-N-acetylmuramate phosphotransferase system transporter activity"/>
    <property type="evidence" value="ECO:0007669"/>
    <property type="project" value="TreeGrafter"/>
</dbReference>
<dbReference type="GO" id="GO:0009401">
    <property type="term" value="P:phosphoenolpyruvate-dependent sugar phosphotransferase system"/>
    <property type="evidence" value="ECO:0007669"/>
    <property type="project" value="UniProtKB-KW"/>
</dbReference>
<dbReference type="CDD" id="cd00212">
    <property type="entry name" value="PTS_IIB_glc"/>
    <property type="match status" value="1"/>
</dbReference>
<dbReference type="FunFam" id="3.30.1360.60:FF:000001">
    <property type="entry name" value="PTS system glucose-specific IIBC component PtsG"/>
    <property type="match status" value="1"/>
</dbReference>
<dbReference type="Gene3D" id="3.30.1360.60">
    <property type="entry name" value="Glucose permease domain IIB"/>
    <property type="match status" value="1"/>
</dbReference>
<dbReference type="InterPro" id="IPR036878">
    <property type="entry name" value="Glu_permease_IIB"/>
</dbReference>
<dbReference type="InterPro" id="IPR018113">
    <property type="entry name" value="PTrfase_EIIB_Cys"/>
</dbReference>
<dbReference type="InterPro" id="IPR003352">
    <property type="entry name" value="PTS_EIIC"/>
</dbReference>
<dbReference type="InterPro" id="IPR013013">
    <property type="entry name" value="PTS_EIIC_1"/>
</dbReference>
<dbReference type="InterPro" id="IPR001996">
    <property type="entry name" value="PTS_IIB_1"/>
</dbReference>
<dbReference type="InterPro" id="IPR050558">
    <property type="entry name" value="PTS_Sugar-Specific_Components"/>
</dbReference>
<dbReference type="NCBIfam" id="NF007152">
    <property type="entry name" value="PRK09586.1"/>
    <property type="match status" value="1"/>
</dbReference>
<dbReference type="PANTHER" id="PTHR30175">
    <property type="entry name" value="PHOSPHOTRANSFERASE SYSTEM TRANSPORT PROTEIN"/>
    <property type="match status" value="1"/>
</dbReference>
<dbReference type="PANTHER" id="PTHR30175:SF3">
    <property type="entry name" value="PTS SYSTEM N-ACETYLMURAMIC ACID-SPECIFIC EIIBC COMPONENT"/>
    <property type="match status" value="1"/>
</dbReference>
<dbReference type="Pfam" id="PF00367">
    <property type="entry name" value="PTS_EIIB"/>
    <property type="match status" value="1"/>
</dbReference>
<dbReference type="Pfam" id="PF02378">
    <property type="entry name" value="PTS_EIIC"/>
    <property type="match status" value="1"/>
</dbReference>
<dbReference type="SUPFAM" id="SSF55604">
    <property type="entry name" value="Glucose permease domain IIB"/>
    <property type="match status" value="1"/>
</dbReference>
<dbReference type="PROSITE" id="PS51098">
    <property type="entry name" value="PTS_EIIB_TYPE_1"/>
    <property type="match status" value="1"/>
</dbReference>
<dbReference type="PROSITE" id="PS01035">
    <property type="entry name" value="PTS_EIIB_TYPE_1_CYS"/>
    <property type="match status" value="1"/>
</dbReference>
<dbReference type="PROSITE" id="PS51103">
    <property type="entry name" value="PTS_EIIC_TYPE_1"/>
    <property type="match status" value="1"/>
</dbReference>
<feature type="chain" id="PRO_0000248953" description="PTS system N-acetylmuramic acid-specific EIIBC component">
    <location>
        <begin position="1"/>
        <end position="474"/>
    </location>
</feature>
<feature type="topological domain" description="Cytoplasmic" evidence="2">
    <location>
        <begin position="1"/>
        <end position="123"/>
    </location>
</feature>
<feature type="transmembrane region" description="Helical" evidence="4">
    <location>
        <begin position="124"/>
        <end position="144"/>
    </location>
</feature>
<feature type="topological domain" description="Periplasmic" evidence="2">
    <location>
        <begin position="145"/>
        <end position="157"/>
    </location>
</feature>
<feature type="transmembrane region" description="Helical" evidence="4">
    <location>
        <begin position="158"/>
        <end position="178"/>
    </location>
</feature>
<feature type="topological domain" description="Cytoplasmic" evidence="2">
    <location>
        <begin position="179"/>
        <end position="180"/>
    </location>
</feature>
<feature type="transmembrane region" description="Helical" evidence="4">
    <location>
        <begin position="181"/>
        <end position="201"/>
    </location>
</feature>
<feature type="topological domain" description="Periplasmic" evidence="2">
    <location>
        <begin position="202"/>
        <end position="217"/>
    </location>
</feature>
<feature type="transmembrane region" description="Helical" evidence="4">
    <location>
        <begin position="218"/>
        <end position="238"/>
    </location>
</feature>
<feature type="topological domain" description="Cytoplasmic" evidence="2">
    <location>
        <begin position="239"/>
        <end position="260"/>
    </location>
</feature>
<feature type="transmembrane region" description="Helical" evidence="4">
    <location>
        <begin position="261"/>
        <end position="281"/>
    </location>
</feature>
<feature type="topological domain" description="Periplasmic" evidence="2">
    <location>
        <begin position="282"/>
        <end position="301"/>
    </location>
</feature>
<feature type="transmembrane region" description="Helical" evidence="4">
    <location>
        <begin position="302"/>
        <end position="322"/>
    </location>
</feature>
<feature type="topological domain" description="Cytoplasmic" evidence="2">
    <location>
        <begin position="323"/>
        <end position="334"/>
    </location>
</feature>
<feature type="transmembrane region" description="Helical" evidence="4">
    <location>
        <begin position="335"/>
        <end position="355"/>
    </location>
</feature>
<feature type="topological domain" description="Periplasmic" evidence="2">
    <location>
        <begin position="356"/>
        <end position="368"/>
    </location>
</feature>
<feature type="transmembrane region" description="Helical" evidence="4">
    <location>
        <begin position="369"/>
        <end position="389"/>
    </location>
</feature>
<feature type="topological domain" description="Cytoplasmic" evidence="2">
    <location>
        <begin position="390"/>
        <end position="393"/>
    </location>
</feature>
<feature type="transmembrane region" description="Helical" evidence="4">
    <location>
        <begin position="394"/>
        <end position="414"/>
    </location>
</feature>
<feature type="topological domain" description="Periplasmic" evidence="2">
    <location>
        <begin position="415"/>
        <end position="440"/>
    </location>
</feature>
<feature type="transmembrane region" description="Helical" evidence="4">
    <location>
        <begin position="441"/>
        <end position="461"/>
    </location>
</feature>
<feature type="topological domain" description="Cytoplasmic" evidence="2">
    <location>
        <begin position="462"/>
        <end position="474"/>
    </location>
</feature>
<feature type="domain" description="PTS EIIB type-1" evidence="3">
    <location>
        <begin position="1"/>
        <end position="89"/>
    </location>
</feature>
<feature type="domain" description="PTS EIIC type-1" evidence="4">
    <location>
        <begin position="115"/>
        <end position="474"/>
    </location>
</feature>
<feature type="active site" description="Phosphocysteine intermediate; for EIIB activity" evidence="3">
    <location>
        <position position="29"/>
    </location>
</feature>
<comment type="function">
    <text evidence="1">The phosphoenolpyruvate-dependent sugar phosphotransferase system (sugar PTS), a major carbohydrate active transport system, catalyzes the phosphorylation of incoming sugar substrates concomitantly with their translocation across the cell membrane. This system is involved in N-acetylmuramic acid (MurNAc) transport, yielding cytoplasmic MurNAc-6-P. Is also able to take up anhydro-N-acetylmuramic acid (anhMurNAc), but cannot phosphorylate the carbon 6, probably because of the 1,6-anhydro ring.</text>
</comment>
<comment type="catalytic activity">
    <reaction evidence="1">
        <text>N-acetyl-beta-D-muramate(out) + N(pros)-phospho-L-histidyl-[protein] = N-acetyl-beta-D-muramate 6-phosphate(in) + L-histidyl-[protein]</text>
        <dbReference type="Rhea" id="RHEA:33399"/>
        <dbReference type="Rhea" id="RHEA-COMP:9745"/>
        <dbReference type="Rhea" id="RHEA-COMP:9746"/>
        <dbReference type="ChEBI" id="CHEBI:29979"/>
        <dbReference type="ChEBI" id="CHEBI:58721"/>
        <dbReference type="ChEBI" id="CHEBI:64837"/>
        <dbReference type="ChEBI" id="CHEBI:64848"/>
        <dbReference type="EC" id="2.7.1.192"/>
    </reaction>
</comment>
<comment type="subcellular location">
    <subcellularLocation>
        <location evidence="4">Cell inner membrane</location>
        <topology evidence="4">Multi-pass membrane protein</topology>
    </subcellularLocation>
</comment>
<comment type="domain">
    <text evidence="3">The EIIB domain is phosphorylated by phospho-EIIA on a cysteinyl or histidyl residue, depending on the transported sugar. Then, it transfers the phosphoryl group to the sugar substrate concomitantly with the sugar uptake processed by the EIIC domain.</text>
</comment>
<comment type="domain">
    <text evidence="4">The EIIC domain forms the PTS system translocation channel and contains the specific substrate-binding site.</text>
</comment>
<reference key="1">
    <citation type="journal article" date="2001" name="Nature">
        <title>Genome sequence of enterohaemorrhagic Escherichia coli O157:H7.</title>
        <authorList>
            <person name="Perna N.T."/>
            <person name="Plunkett G. III"/>
            <person name="Burland V."/>
            <person name="Mau B."/>
            <person name="Glasner J.D."/>
            <person name="Rose D.J."/>
            <person name="Mayhew G.F."/>
            <person name="Evans P.S."/>
            <person name="Gregor J."/>
            <person name="Kirkpatrick H.A."/>
            <person name="Posfai G."/>
            <person name="Hackett J."/>
            <person name="Klink S."/>
            <person name="Boutin A."/>
            <person name="Shao Y."/>
            <person name="Miller L."/>
            <person name="Grotbeck E.J."/>
            <person name="Davis N.W."/>
            <person name="Lim A."/>
            <person name="Dimalanta E.T."/>
            <person name="Potamousis K."/>
            <person name="Apodaca J."/>
            <person name="Anantharaman T.S."/>
            <person name="Lin J."/>
            <person name="Yen G."/>
            <person name="Schwartz D.C."/>
            <person name="Welch R.A."/>
            <person name="Blattner F.R."/>
        </authorList>
    </citation>
    <scope>NUCLEOTIDE SEQUENCE [LARGE SCALE GENOMIC DNA]</scope>
    <source>
        <strain>O157:H7 / EDL933 / ATCC 700927 / EHEC</strain>
    </source>
</reference>
<reference key="2">
    <citation type="journal article" date="2001" name="DNA Res.">
        <title>Complete genome sequence of enterohemorrhagic Escherichia coli O157:H7 and genomic comparison with a laboratory strain K-12.</title>
        <authorList>
            <person name="Hayashi T."/>
            <person name="Makino K."/>
            <person name="Ohnishi M."/>
            <person name="Kurokawa K."/>
            <person name="Ishii K."/>
            <person name="Yokoyama K."/>
            <person name="Han C.-G."/>
            <person name="Ohtsubo E."/>
            <person name="Nakayama K."/>
            <person name="Murata T."/>
            <person name="Tanaka M."/>
            <person name="Tobe T."/>
            <person name="Iida T."/>
            <person name="Takami H."/>
            <person name="Honda T."/>
            <person name="Sasakawa C."/>
            <person name="Ogasawara N."/>
            <person name="Yasunaga T."/>
            <person name="Kuhara S."/>
            <person name="Shiba T."/>
            <person name="Hattori M."/>
            <person name="Shinagawa H."/>
        </authorList>
    </citation>
    <scope>NUCLEOTIDE SEQUENCE [LARGE SCALE GENOMIC DNA]</scope>
    <source>
        <strain>O157:H7 / Sakai / RIMD 0509952 / EHEC</strain>
    </source>
</reference>
<sequence>MAKEISSELLNTILTRVGGPGNIASCGNCMTRLRLGVHDSSLVDPDIKTLEGVKGVILTSDQVQVVFGPGKAHRAAKAMSELLGEAPVQDAAEIAAQNKRQLKAKQTSGVQQFLAKFATIFTPLIPGFIAAGLLLGIATLIATVMHVPADAQGTLPDALNFMKVFSKGLFTFLVILVGYNAAQAFGGTGVNGAIIAALFLLGYNPAATTGYYAGFHDFFGLPIDPRGNIIGVLIAAWACARIEGMVRRFMPDDLDMLLTSLITLLITATLAYLIIMPLGGWLFEGMSWLFMHLNSNPLGCAVLAGLFLIAVVFGVHQGFIPVYLALMDSQGFNSLFPILSMAGAGQVGAALALYWRAQPHSALRSQVRGAIIPGLLGVGEPLIYGVTLPRMKPFITACLGGAAGGLFIGLIAWWGLPMGLNSAFGPSGLVALPLMTSAQGILPAMAVYAGGILVAWVCGFIFTTLFGCRNVNLD</sequence>
<organism>
    <name type="scientific">Escherichia coli O157:H7</name>
    <dbReference type="NCBI Taxonomy" id="83334"/>
    <lineage>
        <taxon>Bacteria</taxon>
        <taxon>Pseudomonadati</taxon>
        <taxon>Pseudomonadota</taxon>
        <taxon>Gammaproteobacteria</taxon>
        <taxon>Enterobacterales</taxon>
        <taxon>Enterobacteriaceae</taxon>
        <taxon>Escherichia</taxon>
    </lineage>
</organism>
<keyword id="KW-0997">Cell inner membrane</keyword>
<keyword id="KW-1003">Cell membrane</keyword>
<keyword id="KW-0418">Kinase</keyword>
<keyword id="KW-0472">Membrane</keyword>
<keyword id="KW-0598">Phosphotransferase system</keyword>
<keyword id="KW-1185">Reference proteome</keyword>
<keyword id="KW-0762">Sugar transport</keyword>
<keyword id="KW-0808">Transferase</keyword>
<keyword id="KW-0812">Transmembrane</keyword>
<keyword id="KW-1133">Transmembrane helix</keyword>
<keyword id="KW-0813">Transport</keyword>
<name>PTYBC_ECO57</name>
<proteinExistence type="inferred from homology"/>
<evidence type="ECO:0000250" key="1">
    <source>
        <dbReference type="UniProtKB" id="P77272"/>
    </source>
</evidence>
<evidence type="ECO:0000255" key="2"/>
<evidence type="ECO:0000255" key="3">
    <source>
        <dbReference type="PROSITE-ProRule" id="PRU00421"/>
    </source>
</evidence>
<evidence type="ECO:0000255" key="4">
    <source>
        <dbReference type="PROSITE-ProRule" id="PRU00426"/>
    </source>
</evidence>
<accession>Q8XBJ1</accession>
<accession>Q7ABS7</accession>